<dbReference type="EC" id="3.6.1.9" evidence="1"/>
<dbReference type="EMBL" id="CP000235">
    <property type="protein sequence ID" value="ABD43449.1"/>
    <property type="molecule type" value="Genomic_DNA"/>
</dbReference>
<dbReference type="SMR" id="Q2GKV0"/>
<dbReference type="STRING" id="212042.APH_0396"/>
<dbReference type="PaxDb" id="212042-APH_0396"/>
<dbReference type="EnsemblBacteria" id="ABD43449">
    <property type="protein sequence ID" value="ABD43449"/>
    <property type="gene ID" value="APH_0396"/>
</dbReference>
<dbReference type="KEGG" id="aph:APH_0396"/>
<dbReference type="eggNOG" id="COG0424">
    <property type="taxonomic scope" value="Bacteria"/>
</dbReference>
<dbReference type="HOGENOM" id="CLU_040416_2_0_5"/>
<dbReference type="Proteomes" id="UP000001943">
    <property type="component" value="Chromosome"/>
</dbReference>
<dbReference type="GO" id="GO:0005737">
    <property type="term" value="C:cytoplasm"/>
    <property type="evidence" value="ECO:0007669"/>
    <property type="project" value="UniProtKB-SubCell"/>
</dbReference>
<dbReference type="GO" id="GO:0047429">
    <property type="term" value="F:nucleoside triphosphate diphosphatase activity"/>
    <property type="evidence" value="ECO:0007669"/>
    <property type="project" value="UniProtKB-EC"/>
</dbReference>
<dbReference type="GO" id="GO:0009117">
    <property type="term" value="P:nucleotide metabolic process"/>
    <property type="evidence" value="ECO:0007669"/>
    <property type="project" value="UniProtKB-KW"/>
</dbReference>
<dbReference type="CDD" id="cd00555">
    <property type="entry name" value="Maf"/>
    <property type="match status" value="1"/>
</dbReference>
<dbReference type="Gene3D" id="3.90.950.10">
    <property type="match status" value="1"/>
</dbReference>
<dbReference type="HAMAP" id="MF_00528">
    <property type="entry name" value="Maf"/>
    <property type="match status" value="1"/>
</dbReference>
<dbReference type="InterPro" id="IPR029001">
    <property type="entry name" value="ITPase-like_fam"/>
</dbReference>
<dbReference type="InterPro" id="IPR003697">
    <property type="entry name" value="Maf-like"/>
</dbReference>
<dbReference type="NCBIfam" id="TIGR00172">
    <property type="entry name" value="maf"/>
    <property type="match status" value="1"/>
</dbReference>
<dbReference type="NCBIfam" id="NF010946">
    <property type="entry name" value="PRK14366.1"/>
    <property type="match status" value="1"/>
</dbReference>
<dbReference type="PANTHER" id="PTHR43213">
    <property type="entry name" value="BIFUNCTIONAL DTTP/UTP PYROPHOSPHATASE/METHYLTRANSFERASE PROTEIN-RELATED"/>
    <property type="match status" value="1"/>
</dbReference>
<dbReference type="PANTHER" id="PTHR43213:SF5">
    <property type="entry name" value="BIFUNCTIONAL DTTP_UTP PYROPHOSPHATASE_METHYLTRANSFERASE PROTEIN-RELATED"/>
    <property type="match status" value="1"/>
</dbReference>
<dbReference type="Pfam" id="PF02545">
    <property type="entry name" value="Maf"/>
    <property type="match status" value="1"/>
</dbReference>
<dbReference type="PIRSF" id="PIRSF006305">
    <property type="entry name" value="Maf"/>
    <property type="match status" value="1"/>
</dbReference>
<dbReference type="SUPFAM" id="SSF52972">
    <property type="entry name" value="ITPase-like"/>
    <property type="match status" value="1"/>
</dbReference>
<gene>
    <name type="ordered locus">APH_0396</name>
</gene>
<comment type="function">
    <text evidence="1">Nucleoside triphosphate pyrophosphatase. May have a dual role in cell division arrest and in preventing the incorporation of modified nucleotides into cellular nucleic acids.</text>
</comment>
<comment type="catalytic activity">
    <reaction evidence="1">
        <text>a ribonucleoside 5'-triphosphate + H2O = a ribonucleoside 5'-phosphate + diphosphate + H(+)</text>
        <dbReference type="Rhea" id="RHEA:23996"/>
        <dbReference type="ChEBI" id="CHEBI:15377"/>
        <dbReference type="ChEBI" id="CHEBI:15378"/>
        <dbReference type="ChEBI" id="CHEBI:33019"/>
        <dbReference type="ChEBI" id="CHEBI:58043"/>
        <dbReference type="ChEBI" id="CHEBI:61557"/>
        <dbReference type="EC" id="3.6.1.9"/>
    </reaction>
</comment>
<comment type="catalytic activity">
    <reaction evidence="1">
        <text>a 2'-deoxyribonucleoside 5'-triphosphate + H2O = a 2'-deoxyribonucleoside 5'-phosphate + diphosphate + H(+)</text>
        <dbReference type="Rhea" id="RHEA:44644"/>
        <dbReference type="ChEBI" id="CHEBI:15377"/>
        <dbReference type="ChEBI" id="CHEBI:15378"/>
        <dbReference type="ChEBI" id="CHEBI:33019"/>
        <dbReference type="ChEBI" id="CHEBI:61560"/>
        <dbReference type="ChEBI" id="CHEBI:65317"/>
        <dbReference type="EC" id="3.6.1.9"/>
    </reaction>
</comment>
<comment type="cofactor">
    <cofactor evidence="1">
        <name>a divalent metal cation</name>
        <dbReference type="ChEBI" id="CHEBI:60240"/>
    </cofactor>
</comment>
<comment type="subcellular location">
    <subcellularLocation>
        <location evidence="1">Cytoplasm</location>
    </subcellularLocation>
</comment>
<comment type="similarity">
    <text evidence="1">Belongs to the Maf family.</text>
</comment>
<reference key="1">
    <citation type="journal article" date="2006" name="PLoS Genet.">
        <title>Comparative genomics of emerging human ehrlichiosis agents.</title>
        <authorList>
            <person name="Dunning Hotopp J.C."/>
            <person name="Lin M."/>
            <person name="Madupu R."/>
            <person name="Crabtree J."/>
            <person name="Angiuoli S.V."/>
            <person name="Eisen J.A."/>
            <person name="Seshadri R."/>
            <person name="Ren Q."/>
            <person name="Wu M."/>
            <person name="Utterback T.R."/>
            <person name="Smith S."/>
            <person name="Lewis M."/>
            <person name="Khouri H."/>
            <person name="Zhang C."/>
            <person name="Niu H."/>
            <person name="Lin Q."/>
            <person name="Ohashi N."/>
            <person name="Zhi N."/>
            <person name="Nelson W.C."/>
            <person name="Brinkac L.M."/>
            <person name="Dodson R.J."/>
            <person name="Rosovitz M.J."/>
            <person name="Sundaram J.P."/>
            <person name="Daugherty S.C."/>
            <person name="Davidsen T."/>
            <person name="Durkin A.S."/>
            <person name="Gwinn M.L."/>
            <person name="Haft D.H."/>
            <person name="Selengut J.D."/>
            <person name="Sullivan S.A."/>
            <person name="Zafar N."/>
            <person name="Zhou L."/>
            <person name="Benahmed F."/>
            <person name="Forberger H."/>
            <person name="Halpin R."/>
            <person name="Mulligan S."/>
            <person name="Robinson J."/>
            <person name="White O."/>
            <person name="Rikihisa Y."/>
            <person name="Tettelin H."/>
        </authorList>
    </citation>
    <scope>NUCLEOTIDE SEQUENCE [LARGE SCALE GENOMIC DNA]</scope>
    <source>
        <strain>HZ</strain>
    </source>
</reference>
<sequence length="193" mass="21570">MDSLVLASSSEYRLRLLKQLMIVPGEVISPDLDESVHKGELPRLYAERVAREKALKVFSSRPDKFVLGADTVAYCGRRIMLKTDDEAQATEYLEMISGRRHRVCTAVCLCAPTGDVRVRSVVSVVKFKRLSKDEIDCYIRSGEWKGKAGGYSIQGWASALISWMQGSHSSIVGLPLHETYCLLSGYFKLTHIP</sequence>
<name>NTPP_ANAPZ</name>
<organism>
    <name type="scientific">Anaplasma phagocytophilum (strain HZ)</name>
    <dbReference type="NCBI Taxonomy" id="212042"/>
    <lineage>
        <taxon>Bacteria</taxon>
        <taxon>Pseudomonadati</taxon>
        <taxon>Pseudomonadota</taxon>
        <taxon>Alphaproteobacteria</taxon>
        <taxon>Rickettsiales</taxon>
        <taxon>Anaplasmataceae</taxon>
        <taxon>Anaplasma</taxon>
        <taxon>phagocytophilum group</taxon>
    </lineage>
</organism>
<accession>Q2GKV0</accession>
<proteinExistence type="inferred from homology"/>
<evidence type="ECO:0000255" key="1">
    <source>
        <dbReference type="HAMAP-Rule" id="MF_00528"/>
    </source>
</evidence>
<feature type="chain" id="PRO_0000267245" description="Nucleoside triphosphate pyrophosphatase">
    <location>
        <begin position="1"/>
        <end position="193"/>
    </location>
</feature>
<feature type="active site" description="Proton acceptor" evidence="1">
    <location>
        <position position="70"/>
    </location>
</feature>
<protein>
    <recommendedName>
        <fullName evidence="1">Nucleoside triphosphate pyrophosphatase</fullName>
        <ecNumber evidence="1">3.6.1.9</ecNumber>
    </recommendedName>
    <alternativeName>
        <fullName evidence="1">Nucleotide pyrophosphatase</fullName>
        <shortName evidence="1">Nucleotide PPase</shortName>
    </alternativeName>
</protein>
<keyword id="KW-0963">Cytoplasm</keyword>
<keyword id="KW-0378">Hydrolase</keyword>
<keyword id="KW-0546">Nucleotide metabolism</keyword>